<gene>
    <name evidence="2" type="primary">ATAT1</name>
    <name evidence="2" type="synonym">MEC17</name>
</gene>
<dbReference type="EC" id="2.3.1.108" evidence="2"/>
<dbReference type="EMBL" id="BT021821">
    <property type="protein sequence ID" value="AAX46668.1"/>
    <property type="molecule type" value="mRNA"/>
</dbReference>
<dbReference type="EMBL" id="BC142375">
    <property type="protein sequence ID" value="AAI42376.1"/>
    <property type="molecule type" value="mRNA"/>
</dbReference>
<dbReference type="SMR" id="Q58CX6"/>
<dbReference type="FunCoup" id="Q58CX6">
    <property type="interactions" value="998"/>
</dbReference>
<dbReference type="STRING" id="9913.ENSBTAP00000009111"/>
<dbReference type="PaxDb" id="9913-ENSBTAP00000009111"/>
<dbReference type="VEuPathDB" id="HostDB:ENSBTAG00000006941"/>
<dbReference type="eggNOG" id="KOG4601">
    <property type="taxonomic scope" value="Eukaryota"/>
</dbReference>
<dbReference type="HOGENOM" id="CLU_025013_2_1_1"/>
<dbReference type="InParanoid" id="Q58CX6"/>
<dbReference type="OrthoDB" id="447510at2759"/>
<dbReference type="Reactome" id="R-BTA-5617833">
    <property type="pathway name" value="Cilium Assembly"/>
</dbReference>
<dbReference type="Proteomes" id="UP000009136">
    <property type="component" value="Chromosome 23"/>
</dbReference>
<dbReference type="Bgee" id="ENSBTAG00000006941">
    <property type="expression patterns" value="Expressed in uterine horn and 106 other cell types or tissues"/>
</dbReference>
<dbReference type="GO" id="GO:0030424">
    <property type="term" value="C:axon"/>
    <property type="evidence" value="ECO:0007669"/>
    <property type="project" value="UniProtKB-SubCell"/>
</dbReference>
<dbReference type="GO" id="GO:0005905">
    <property type="term" value="C:clathrin-coated pit"/>
    <property type="evidence" value="ECO:0007669"/>
    <property type="project" value="UniProtKB-SubCell"/>
</dbReference>
<dbReference type="GO" id="GO:0005737">
    <property type="term" value="C:cytoplasm"/>
    <property type="evidence" value="ECO:0007669"/>
    <property type="project" value="UniProtKB-SubCell"/>
</dbReference>
<dbReference type="GO" id="GO:0005925">
    <property type="term" value="C:focal adhesion"/>
    <property type="evidence" value="ECO:0007669"/>
    <property type="project" value="UniProtKB-SubCell"/>
</dbReference>
<dbReference type="GO" id="GO:0005874">
    <property type="term" value="C:microtubule"/>
    <property type="evidence" value="ECO:0007669"/>
    <property type="project" value="InterPro"/>
</dbReference>
<dbReference type="GO" id="GO:0005819">
    <property type="term" value="C:spindle"/>
    <property type="evidence" value="ECO:0007669"/>
    <property type="project" value="UniProtKB-SubCell"/>
</dbReference>
<dbReference type="GO" id="GO:0004468">
    <property type="term" value="F:L-lysine N-acetyltransferase activity, acting on acetyl phosphate as donor"/>
    <property type="evidence" value="ECO:0000250"/>
    <property type="project" value="UniProtKB"/>
</dbReference>
<dbReference type="GO" id="GO:0019799">
    <property type="term" value="F:tubulin N-acetyltransferase activity"/>
    <property type="evidence" value="ECO:0000250"/>
    <property type="project" value="UniProtKB"/>
</dbReference>
<dbReference type="GO" id="GO:0071929">
    <property type="term" value="P:alpha-tubulin acetylation"/>
    <property type="evidence" value="ECO:0000250"/>
    <property type="project" value="UniProtKB"/>
</dbReference>
<dbReference type="GO" id="GO:0000226">
    <property type="term" value="P:microtubule cytoskeleton organization"/>
    <property type="evidence" value="ECO:0000318"/>
    <property type="project" value="GO_Central"/>
</dbReference>
<dbReference type="GO" id="GO:0048666">
    <property type="term" value="P:neuron development"/>
    <property type="evidence" value="ECO:0007669"/>
    <property type="project" value="UniProtKB-UniRule"/>
</dbReference>
<dbReference type="GO" id="GO:0070507">
    <property type="term" value="P:regulation of microtubule cytoskeleton organization"/>
    <property type="evidence" value="ECO:0007669"/>
    <property type="project" value="UniProtKB-UniRule"/>
</dbReference>
<dbReference type="CDD" id="cd04301">
    <property type="entry name" value="NAT_SF"/>
    <property type="match status" value="1"/>
</dbReference>
<dbReference type="FunFam" id="3.40.630.30:FF:000060">
    <property type="entry name" value="Alpha-tubulin N-acetyltransferase 1"/>
    <property type="match status" value="1"/>
</dbReference>
<dbReference type="Gene3D" id="3.40.630.30">
    <property type="match status" value="1"/>
</dbReference>
<dbReference type="Gene3D" id="6.20.370.120">
    <property type="match status" value="1"/>
</dbReference>
<dbReference type="HAMAP" id="MF_03130">
    <property type="entry name" value="mec17"/>
    <property type="match status" value="1"/>
</dbReference>
<dbReference type="InterPro" id="IPR016181">
    <property type="entry name" value="Acyl_CoA_acyltransferase"/>
</dbReference>
<dbReference type="InterPro" id="IPR038746">
    <property type="entry name" value="Atat"/>
</dbReference>
<dbReference type="InterPro" id="IPR007965">
    <property type="entry name" value="GNAT_ATAT"/>
</dbReference>
<dbReference type="PANTHER" id="PTHR12327">
    <property type="entry name" value="ALPHA-TUBULIN N-ACETYLTRANSFERASE 1"/>
    <property type="match status" value="1"/>
</dbReference>
<dbReference type="PANTHER" id="PTHR12327:SF0">
    <property type="entry name" value="ALPHA-TUBULIN N-ACETYLTRANSFERASE 1"/>
    <property type="match status" value="1"/>
</dbReference>
<dbReference type="Pfam" id="PF05301">
    <property type="entry name" value="Acetyltransf_16"/>
    <property type="match status" value="1"/>
</dbReference>
<dbReference type="SUPFAM" id="SSF55729">
    <property type="entry name" value="Acyl-CoA N-acyltransferases (Nat)"/>
    <property type="match status" value="1"/>
</dbReference>
<dbReference type="PROSITE" id="PS51730">
    <property type="entry name" value="GNAT_ATAT"/>
    <property type="match status" value="1"/>
</dbReference>
<evidence type="ECO:0000250" key="1">
    <source>
        <dbReference type="UniProtKB" id="Q8K341"/>
    </source>
</evidence>
<evidence type="ECO:0000255" key="2">
    <source>
        <dbReference type="HAMAP-Rule" id="MF_03130"/>
    </source>
</evidence>
<evidence type="ECO:0000256" key="3">
    <source>
        <dbReference type="SAM" id="MobiDB-lite"/>
    </source>
</evidence>
<evidence type="ECO:0000303" key="4">
    <source ref="2"/>
</evidence>
<comment type="function">
    <text evidence="2">Specifically acetylates 'Lys-40' in alpha-tubulin on the lumenal side of microtubules. Promotes microtubule destabilization and accelerates microtubule dynamics; this activity may be independent of acetylation activity. Acetylates alpha-tubulin with a slow enzymatic rate, due to a catalytic site that is not optimized for acetyl transfer. Enters the microtubule through each end and diffuses quickly throughout the lumen of microtubules. Acetylates only long/old microtubules because of its slow acetylation rate since it does not have time to act on dynamically unstable microtubules before the enzyme is released. Required for normal sperm flagellar function. Promotes directional cell locomotion and chemotaxis, through AP2A2-dependent acetylation of alpha-tubulin at clathrin-coated pits that are concentrated at the leading edge of migrating cells. May facilitate primary cilium assembly.</text>
</comment>
<comment type="catalytic activity">
    <reaction evidence="2">
        <text>L-lysyl-[alpha-tubulin] + acetyl-CoA = N(6)-acetyl-L-lysyl-[alpha-tubulin] + CoA + H(+)</text>
        <dbReference type="Rhea" id="RHEA:15277"/>
        <dbReference type="Rhea" id="RHEA-COMP:11278"/>
        <dbReference type="Rhea" id="RHEA-COMP:11279"/>
        <dbReference type="ChEBI" id="CHEBI:15378"/>
        <dbReference type="ChEBI" id="CHEBI:29969"/>
        <dbReference type="ChEBI" id="CHEBI:57287"/>
        <dbReference type="ChEBI" id="CHEBI:57288"/>
        <dbReference type="ChEBI" id="CHEBI:61930"/>
        <dbReference type="EC" id="2.3.1.108"/>
    </reaction>
</comment>
<comment type="subunit">
    <text evidence="2">Component of the BBSome complex. Interacts with AP2 alpha-adaptins, including AP2A2, but not with AP1 gamma-adaptin (AP1G1/AP1G2); this interaction is required for efficient alpha-tubulin acetylation, hence clathrin-coated pits are sites of microtubule acetylation.</text>
</comment>
<comment type="subcellular location">
    <subcellularLocation>
        <location evidence="2">Cytoplasm</location>
    </subcellularLocation>
    <subcellularLocation>
        <location evidence="2">Membrane</location>
        <location evidence="2">Clathrin-coated pit</location>
    </subcellularLocation>
    <subcellularLocation>
        <location evidence="2">Cell junction</location>
        <location evidence="2">Focal adhesion</location>
    </subcellularLocation>
    <subcellularLocation>
        <location evidence="2">Cell projection</location>
        <location evidence="2">Axon</location>
    </subcellularLocation>
    <subcellularLocation>
        <location evidence="2">Cytoplasm</location>
        <location evidence="2">Cytoskeleton</location>
    </subcellularLocation>
    <subcellularLocation>
        <location evidence="2">Cytoplasm</location>
        <location evidence="2">Cytoskeleton</location>
        <location evidence="2">Spindle</location>
    </subcellularLocation>
</comment>
<comment type="alternative products">
    <event type="alternative splicing"/>
    <isoform>
        <id>Q58CX6-1</id>
        <name>1</name>
        <sequence type="displayed"/>
    </isoform>
    <isoform>
        <id>Q58CX6-2</id>
        <name>2</name>
        <sequence type="described" ref="VSP_040228"/>
    </isoform>
</comment>
<comment type="PTM">
    <text evidence="2">Autoacetylation strongly increases tubulin acetylation.</text>
</comment>
<comment type="similarity">
    <text evidence="2">Belongs to the acetyltransferase ATAT1 family.</text>
</comment>
<accession>Q58CX6</accession>
<accession>A5PK64</accession>
<protein>
    <recommendedName>
        <fullName evidence="2">Alpha-tubulin N-acetyltransferase 1</fullName>
        <shortName evidence="2">Alpha-TAT</shortName>
        <shortName evidence="2">Alpha-TAT1</shortName>
        <shortName evidence="2">TAT</shortName>
        <ecNumber evidence="2">2.3.1.108</ecNumber>
    </recommendedName>
    <alternativeName>
        <fullName evidence="2">Acetyltransferase mec-17 homolog</fullName>
    </alternativeName>
</protein>
<proteinExistence type="evidence at transcript level"/>
<reference key="1">
    <citation type="journal article" date="2005" name="BMC Genomics">
        <title>Characterization of 954 bovine full-CDS cDNA sequences.</title>
        <authorList>
            <person name="Harhay G.P."/>
            <person name="Sonstegard T.S."/>
            <person name="Keele J.W."/>
            <person name="Heaton M.P."/>
            <person name="Clawson M.L."/>
            <person name="Snelling W.M."/>
            <person name="Wiedmann R.T."/>
            <person name="Van Tassell C.P."/>
            <person name="Smith T.P.L."/>
        </authorList>
    </citation>
    <scope>NUCLEOTIDE SEQUENCE [LARGE SCALE MRNA] (ISOFORM 1)</scope>
</reference>
<reference key="2">
    <citation type="submission" date="2007-06" db="EMBL/GenBank/DDBJ databases">
        <authorList>
            <consortium name="NIH - Mammalian Gene Collection (MGC) project"/>
        </authorList>
    </citation>
    <scope>NUCLEOTIDE SEQUENCE [LARGE SCALE MRNA] (ISOFORM 2)</scope>
    <source>
        <strain>Crossbred X Angus</strain>
        <tissue>Ileum</tissue>
    </source>
</reference>
<feature type="chain" id="PRO_0000402064" description="Alpha-tubulin N-acetyltransferase 1">
    <location>
        <begin position="1"/>
        <end position="225"/>
    </location>
</feature>
<feature type="domain" description="N-acetyltransferase" evidence="2">
    <location>
        <begin position="1"/>
        <end position="190"/>
    </location>
</feature>
<feature type="region of interest" description="Disordered" evidence="3">
    <location>
        <begin position="195"/>
        <end position="225"/>
    </location>
</feature>
<feature type="compositionally biased region" description="Basic and acidic residues" evidence="3">
    <location>
        <begin position="203"/>
        <end position="219"/>
    </location>
</feature>
<feature type="binding site" evidence="2">
    <location>
        <begin position="124"/>
        <end position="137"/>
    </location>
    <ligand>
        <name>acetyl-CoA</name>
        <dbReference type="ChEBI" id="CHEBI:57288"/>
    </ligand>
</feature>
<feature type="binding site" evidence="2">
    <location>
        <begin position="160"/>
        <end position="169"/>
    </location>
    <ligand>
        <name>acetyl-CoA</name>
        <dbReference type="ChEBI" id="CHEBI:57288"/>
    </ligand>
</feature>
<feature type="site" description="Crucial for catalytic activity" evidence="2">
    <location>
        <position position="58"/>
    </location>
</feature>
<feature type="modified residue" description="N6-acetyllysine; by autocatalysis" evidence="1 2">
    <location>
        <position position="56"/>
    </location>
</feature>
<feature type="modified residue" description="N6-acetyllysine; by autocatalysis" evidence="1 2">
    <location>
        <position position="146"/>
    </location>
</feature>
<feature type="modified residue" description="N6-acetyllysine; by autocatalysis" evidence="1 2">
    <location>
        <position position="210"/>
    </location>
</feature>
<feature type="splice variant" id="VSP_040228" description="In isoform 2." evidence="4">
    <original>NNFVIFEGFFAHQHPPARKLPPKRAEGDIKPYSSSDRESGLPQGW</original>
    <variation>RSFRE</variation>
    <location>
        <begin position="181"/>
        <end position="225"/>
    </location>
</feature>
<organism>
    <name type="scientific">Bos taurus</name>
    <name type="common">Bovine</name>
    <dbReference type="NCBI Taxonomy" id="9913"/>
    <lineage>
        <taxon>Eukaryota</taxon>
        <taxon>Metazoa</taxon>
        <taxon>Chordata</taxon>
        <taxon>Craniata</taxon>
        <taxon>Vertebrata</taxon>
        <taxon>Euteleostomi</taxon>
        <taxon>Mammalia</taxon>
        <taxon>Eutheria</taxon>
        <taxon>Laurasiatheria</taxon>
        <taxon>Artiodactyla</taxon>
        <taxon>Ruminantia</taxon>
        <taxon>Pecora</taxon>
        <taxon>Bovidae</taxon>
        <taxon>Bovinae</taxon>
        <taxon>Bos</taxon>
    </lineage>
</organism>
<name>ATAT_BOVIN</name>
<sequence length="225" mass="25675">MEFPFDVDALLPERITVLDQHLRPPARRPGTTTPARVDLQQQIMTIVDELGKASAKAQHLPAPITSASRMQSNRHVMYILKDTSARPAGKGAIVGFLKVGYKKLFVLDDREAHNEVEPLCILDFYIHESLQRHGHGRELFQHMLQKERVEPHQLAIDRPSQKLLKFLNKHYNLETTVPQVNNFVIFEGFFAHQHPPARKLPPKRAEGDIKPYSSSDRESGLPQGW</sequence>
<keyword id="KW-0007">Acetylation</keyword>
<keyword id="KW-0012">Acyltransferase</keyword>
<keyword id="KW-0025">Alternative splicing</keyword>
<keyword id="KW-0965">Cell junction</keyword>
<keyword id="KW-0966">Cell projection</keyword>
<keyword id="KW-0168">Coated pit</keyword>
<keyword id="KW-0963">Cytoplasm</keyword>
<keyword id="KW-0206">Cytoskeleton</keyword>
<keyword id="KW-0472">Membrane</keyword>
<keyword id="KW-1185">Reference proteome</keyword>
<keyword id="KW-0808">Transferase</keyword>